<reference key="1">
    <citation type="journal article" date="1990" name="J. Biochem.">
        <title>Purification and characterization of NADPH-dependent methemoglobin reductase from the nucleated erythrocytes of bullfrog, Rana catesbeiana.</title>
        <authorList>
            <person name="Abe Y."/>
            <person name="Ito T."/>
            <person name="Okazaki T."/>
        </authorList>
    </citation>
    <scope>PROTEIN SEQUENCE</scope>
    <scope>FUNCTION</scope>
    <scope>SUBUNIT</scope>
    <scope>CATALYTIC ACTIVITY</scope>
    <scope>TISSUE SPECIFICITY</scope>
    <source>
        <tissue>Erythrocyte</tissue>
    </source>
</reference>
<protein>
    <recommendedName>
        <fullName>Flavin reductase (NADPH)</fullName>
        <shortName>FR</shortName>
        <ecNumber evidence="2">1.5.1.30</ecNumber>
    </recommendedName>
    <alternativeName>
        <fullName>Biliverdin reductase B</fullName>
        <shortName>BVR-B</shortName>
    </alternativeName>
    <alternativeName>
        <fullName>Biliverdin-IX beta-reductase</fullName>
        <ecNumber evidence="1">1.3.1.-</ecNumber>
    </alternativeName>
    <alternativeName>
        <fullName>NADPH-dehydrogenase</fullName>
    </alternativeName>
    <alternativeName>
        <fullName>NADPH-dependent diaphorase</fullName>
    </alternativeName>
    <alternativeName>
        <fullName>NADPH-methemoglobin reductase</fullName>
    </alternativeName>
    <alternativeName>
        <fullName evidence="1">S-nitroso-CoA-assisted nitrosyltransferase</fullName>
        <shortName evidence="1">SNO-CoA-assisted nitrosyltransferase</shortName>
        <ecNumber evidence="1">2.6.99.-</ecNumber>
    </alternativeName>
</protein>
<sequence>APKNIVLFGATGMTGQVTLGQALE</sequence>
<feature type="chain" id="PRO_0000064950" description="Flavin reductase (NADPH)">
    <location>
        <begin position="1"/>
        <end position="24" status="greater than"/>
    </location>
</feature>
<feature type="binding site" evidence="1">
    <location>
        <position position="9"/>
    </location>
    <ligand>
        <name>NADP(+)</name>
        <dbReference type="ChEBI" id="CHEBI:58349"/>
    </ligand>
</feature>
<feature type="binding site" evidence="1">
    <location>
        <position position="11"/>
    </location>
    <ligand>
        <name>NADP(+)</name>
        <dbReference type="ChEBI" id="CHEBI:58349"/>
    </ligand>
</feature>
<feature type="binding site" evidence="1">
    <location>
        <position position="12"/>
    </location>
    <ligand>
        <name>NADP(+)</name>
        <dbReference type="ChEBI" id="CHEBI:58349"/>
    </ligand>
</feature>
<feature type="binding site" evidence="1">
    <location>
        <position position="14"/>
    </location>
    <ligand>
        <name>NADP(+)</name>
        <dbReference type="ChEBI" id="CHEBI:58349"/>
    </ligand>
</feature>
<feature type="non-terminal residue">
    <location>
        <position position="24"/>
    </location>
</feature>
<name>BLVRB_AQUCT</name>
<dbReference type="EC" id="1.5.1.30" evidence="2"/>
<dbReference type="EC" id="1.3.1.-" evidence="1"/>
<dbReference type="EC" id="2.6.99.-" evidence="1"/>
<dbReference type="PIR" id="PX0038">
    <property type="entry name" value="PX0038"/>
</dbReference>
<dbReference type="GO" id="GO:0005737">
    <property type="term" value="C:cytoplasm"/>
    <property type="evidence" value="ECO:0007669"/>
    <property type="project" value="UniProtKB-SubCell"/>
</dbReference>
<dbReference type="GO" id="GO:0004074">
    <property type="term" value="F:biliverdin reductase [NAD(P)+] activity"/>
    <property type="evidence" value="ECO:0000250"/>
    <property type="project" value="UniProtKB"/>
</dbReference>
<dbReference type="GO" id="GO:0052874">
    <property type="term" value="F:FMN reductase (NADH) activity"/>
    <property type="evidence" value="ECO:0007669"/>
    <property type="project" value="RHEA"/>
</dbReference>
<dbReference type="GO" id="GO:0052873">
    <property type="term" value="F:FMN reductase (NADPH) activity"/>
    <property type="evidence" value="ECO:0007669"/>
    <property type="project" value="RHEA"/>
</dbReference>
<dbReference type="GO" id="GO:0035605">
    <property type="term" value="F:peptidyl-cysteine S-nitrosylase activity"/>
    <property type="evidence" value="ECO:0000250"/>
    <property type="project" value="UniProtKB"/>
</dbReference>
<dbReference type="GO" id="GO:0042602">
    <property type="term" value="F:riboflavin reductase (NADPH) activity"/>
    <property type="evidence" value="ECO:0007669"/>
    <property type="project" value="UniProtKB-EC"/>
</dbReference>
<dbReference type="GO" id="GO:0042167">
    <property type="term" value="P:heme catabolic process"/>
    <property type="evidence" value="ECO:0000250"/>
    <property type="project" value="UniProtKB"/>
</dbReference>
<dbReference type="GO" id="GO:0030219">
    <property type="term" value="P:megakaryocyte differentiation"/>
    <property type="evidence" value="ECO:0000250"/>
    <property type="project" value="UniProtKB"/>
</dbReference>
<dbReference type="GO" id="GO:0046627">
    <property type="term" value="P:negative regulation of insulin receptor signaling pathway"/>
    <property type="evidence" value="ECO:0000250"/>
    <property type="project" value="UniProtKB"/>
</dbReference>
<organism>
    <name type="scientific">Aquarana catesbeiana</name>
    <name type="common">American bullfrog</name>
    <name type="synonym">Rana catesbeiana</name>
    <dbReference type="NCBI Taxonomy" id="8400"/>
    <lineage>
        <taxon>Eukaryota</taxon>
        <taxon>Metazoa</taxon>
        <taxon>Chordata</taxon>
        <taxon>Craniata</taxon>
        <taxon>Vertebrata</taxon>
        <taxon>Euteleostomi</taxon>
        <taxon>Amphibia</taxon>
        <taxon>Batrachia</taxon>
        <taxon>Anura</taxon>
        <taxon>Neobatrachia</taxon>
        <taxon>Ranoidea</taxon>
        <taxon>Ranidae</taxon>
        <taxon>Aquarana</taxon>
    </lineage>
</organism>
<proteinExistence type="evidence at protein level"/>
<keyword id="KW-0963">Cytoplasm</keyword>
<keyword id="KW-0903">Direct protein sequencing</keyword>
<keyword id="KW-0521">NADP</keyword>
<keyword id="KW-0560">Oxidoreductase</keyword>
<keyword id="KW-0808">Transferase</keyword>
<comment type="function">
    <text evidence="1 2">Enzyme that can both act as a NAD(P)H-dependent reductase and a S-nitroso-CoA-dependent nitrosyltransferase (By similarity). Promotes fetal heme degradation during development (By similarity). Also expressed in adult tissues, where it acts as a regulator of hematopoiesis, intermediary metabolism (glutaminolysis, glycolysis, TCA cycle and pentose phosphate pathway) and insulin signaling (By similarity). Has a broad specificity oxidoreductase activity by catalyzing the NAD(P)H-dependent reduction of a variety of flavins, such as riboflavin, FAD or FMN, biliverdins, methemoglobin and PQQ (pyrroloquinoline quinone) (PubMed:2172227). Contributes to fetal heme catabolism by catalyzing reduction of biliverdin IXbeta into bilirubin IXbeta in the liver (By similarity). Biliverdin IXbeta, which constitutes the major heme catabolite in the fetus is not present in adult (By similarity). Does not reduce bilirubin IXalpha (By similarity). Can also reduce the complexed Fe(3+) iron to Fe(2+) in the presence of FMN and NADPH (By similarity). Acts as a protein nitrosyltransferase by catalyzing nitrosylation of cysteine residues of target proteins, such as HMOX2, INSR and IRS1 (By similarity). S-nitroso-CoA-dependent nitrosyltransferase activity is mediated via a 'ping-pong' mechanism: BLVRB first associates with both S-nitroso-CoA and protein substrate, nitric oxide group is then transferred from S-nitroso-CoA to Cys residues of BLVRB and from S-nitroso-BLVRB to the protein substrate (By similarity). Inhibits insulin signaling by mediating nitrosylation of INSR and IRS1, leading to their inhibition (By similarity).</text>
</comment>
<comment type="catalytic activity">
    <reaction evidence="2">
        <text>reduced riboflavin + NADP(+) = riboflavin + NADPH + 2 H(+)</text>
        <dbReference type="Rhea" id="RHEA:19377"/>
        <dbReference type="ChEBI" id="CHEBI:15378"/>
        <dbReference type="ChEBI" id="CHEBI:17607"/>
        <dbReference type="ChEBI" id="CHEBI:57783"/>
        <dbReference type="ChEBI" id="CHEBI:57986"/>
        <dbReference type="ChEBI" id="CHEBI:58349"/>
        <dbReference type="EC" id="1.5.1.30"/>
    </reaction>
    <physiologicalReaction direction="right-to-left" evidence="2">
        <dbReference type="Rhea" id="RHEA:19379"/>
    </physiologicalReaction>
</comment>
<comment type="catalytic activity">
    <reaction evidence="1">
        <text>bilirubin IXbeta + NADP(+) = biliverdin IXbeta + NADPH + H(+)</text>
        <dbReference type="Rhea" id="RHEA:78395"/>
        <dbReference type="ChEBI" id="CHEBI:15378"/>
        <dbReference type="ChEBI" id="CHEBI:57783"/>
        <dbReference type="ChEBI" id="CHEBI:58349"/>
        <dbReference type="ChEBI" id="CHEBI:136509"/>
        <dbReference type="ChEBI" id="CHEBI:228295"/>
    </reaction>
    <physiologicalReaction direction="right-to-left" evidence="1">
        <dbReference type="Rhea" id="RHEA:78397"/>
    </physiologicalReaction>
</comment>
<comment type="catalytic activity">
    <reaction evidence="1">
        <text>FMNH2 + NAD(+) = FMN + NADH + 2 H(+)</text>
        <dbReference type="Rhea" id="RHEA:21620"/>
        <dbReference type="ChEBI" id="CHEBI:15378"/>
        <dbReference type="ChEBI" id="CHEBI:57540"/>
        <dbReference type="ChEBI" id="CHEBI:57618"/>
        <dbReference type="ChEBI" id="CHEBI:57945"/>
        <dbReference type="ChEBI" id="CHEBI:58210"/>
    </reaction>
    <physiologicalReaction direction="right-to-left" evidence="1">
        <dbReference type="Rhea" id="RHEA:21622"/>
    </physiologicalReaction>
</comment>
<comment type="catalytic activity">
    <reaction evidence="1">
        <text>FMNH2 + NADP(+) = FMN + NADPH + 2 H(+)</text>
        <dbReference type="Rhea" id="RHEA:21624"/>
        <dbReference type="ChEBI" id="CHEBI:15378"/>
        <dbReference type="ChEBI" id="CHEBI:57618"/>
        <dbReference type="ChEBI" id="CHEBI:57783"/>
        <dbReference type="ChEBI" id="CHEBI:58210"/>
        <dbReference type="ChEBI" id="CHEBI:58349"/>
    </reaction>
    <physiologicalReaction direction="right-to-left" evidence="1">
        <dbReference type="Rhea" id="RHEA:21626"/>
    </physiologicalReaction>
</comment>
<comment type="catalytic activity">
    <reaction evidence="1">
        <text>S-nitroso-CoA + L-cysteinyl-[protein] = S-nitroso-L-cysteinyl-[protein] + CoA</text>
        <dbReference type="Rhea" id="RHEA:78379"/>
        <dbReference type="Rhea" id="RHEA-COMP:10131"/>
        <dbReference type="Rhea" id="RHEA-COMP:17091"/>
        <dbReference type="ChEBI" id="CHEBI:29950"/>
        <dbReference type="ChEBI" id="CHEBI:57287"/>
        <dbReference type="ChEBI" id="CHEBI:145546"/>
        <dbReference type="ChEBI" id="CHEBI:149494"/>
    </reaction>
    <physiologicalReaction direction="left-to-right" evidence="1">
        <dbReference type="Rhea" id="RHEA:78380"/>
    </physiologicalReaction>
</comment>
<comment type="catalytic activity">
    <reaction evidence="1">
        <text>L-cysteinyl-[SCAN] + S-nitroso-CoA = S-nitroso-L-cysteinyl-[SCAN] + CoA</text>
        <dbReference type="Rhea" id="RHEA:78383"/>
        <dbReference type="Rhea" id="RHEA-COMP:19068"/>
        <dbReference type="Rhea" id="RHEA-COMP:19069"/>
        <dbReference type="ChEBI" id="CHEBI:29950"/>
        <dbReference type="ChEBI" id="CHEBI:57287"/>
        <dbReference type="ChEBI" id="CHEBI:145546"/>
        <dbReference type="ChEBI" id="CHEBI:149494"/>
    </reaction>
    <physiologicalReaction direction="left-to-right" evidence="1">
        <dbReference type="Rhea" id="RHEA:78384"/>
    </physiologicalReaction>
</comment>
<comment type="catalytic activity">
    <reaction evidence="1">
        <text>S-nitroso-L-cysteinyl-[SCAN] + L-cysteinyl-[protein] = L-cysteinyl-[SCAN] + S-nitroso-L-cysteinyl-[protein]</text>
        <dbReference type="Rhea" id="RHEA:78387"/>
        <dbReference type="Rhea" id="RHEA-COMP:10131"/>
        <dbReference type="Rhea" id="RHEA-COMP:17091"/>
        <dbReference type="Rhea" id="RHEA-COMP:19068"/>
        <dbReference type="Rhea" id="RHEA-COMP:19069"/>
        <dbReference type="ChEBI" id="CHEBI:29950"/>
        <dbReference type="ChEBI" id="CHEBI:149494"/>
    </reaction>
    <physiologicalReaction direction="left-to-right" evidence="1">
        <dbReference type="Rhea" id="RHEA:78388"/>
    </physiologicalReaction>
</comment>
<comment type="biophysicochemical properties">
    <phDependence>
        <text>Optimum pH is 5.0 for NADPH-methemoglobin reductase activity, and 6.5 for NADPH-diaphorase activity.</text>
    </phDependence>
</comment>
<comment type="subunit">
    <text evidence="1">Monomer.</text>
</comment>
<comment type="subcellular location">
    <subcellularLocation>
        <location evidence="1">Cytoplasm</location>
    </subcellularLocation>
</comment>
<comment type="tissue specificity">
    <text evidence="2">Detected in erythrocytes (at protein level).</text>
</comment>
<comment type="similarity">
    <text evidence="3">Belongs to the BLVRB family.</text>
</comment>
<accession>P55736</accession>
<gene>
    <name type="primary">BLVRB</name>
    <name evidence="1" type="synonym">SCAN</name>
</gene>
<evidence type="ECO:0000250" key="1">
    <source>
        <dbReference type="UniProtKB" id="P30043"/>
    </source>
</evidence>
<evidence type="ECO:0000269" key="2">
    <source>
    </source>
</evidence>
<evidence type="ECO:0000305" key="3"/>